<gene>
    <name type="primary">CLPS</name>
</gene>
<organism>
    <name type="scientific">Oryctolagus cuniculus</name>
    <name type="common">Rabbit</name>
    <dbReference type="NCBI Taxonomy" id="9986"/>
    <lineage>
        <taxon>Eukaryota</taxon>
        <taxon>Metazoa</taxon>
        <taxon>Chordata</taxon>
        <taxon>Craniata</taxon>
        <taxon>Vertebrata</taxon>
        <taxon>Euteleostomi</taxon>
        <taxon>Mammalia</taxon>
        <taxon>Eutheria</taxon>
        <taxon>Euarchontoglires</taxon>
        <taxon>Glires</taxon>
        <taxon>Lagomorpha</taxon>
        <taxon>Leporidae</taxon>
        <taxon>Oryctolagus</taxon>
    </lineage>
</organism>
<feature type="signal peptide" evidence="2">
    <location>
        <begin position="1"/>
        <end position="17"/>
    </location>
</feature>
<feature type="propeptide" id="PRO_0000005704" description="Enterostatin, activation peptide" evidence="2">
    <location>
        <begin position="18"/>
        <end position="22"/>
    </location>
</feature>
<feature type="chain" id="PRO_0000005705" description="Colipase">
    <location>
        <begin position="23"/>
        <end position="107"/>
    </location>
</feature>
<feature type="disulfide bond" evidence="3">
    <location>
        <begin position="34"/>
        <end position="45"/>
    </location>
</feature>
<feature type="disulfide bond" evidence="3">
    <location>
        <begin position="40"/>
        <end position="56"/>
    </location>
</feature>
<feature type="disulfide bond" evidence="3">
    <location>
        <begin position="44"/>
        <end position="78"/>
    </location>
</feature>
<feature type="disulfide bond" evidence="3">
    <location>
        <begin position="66"/>
        <end position="86"/>
    </location>
</feature>
<feature type="disulfide bond" evidence="3">
    <location>
        <begin position="80"/>
        <end position="104"/>
    </location>
</feature>
<accession>P42890</accession>
<proteinExistence type="evidence at transcript level"/>
<reference key="1">
    <citation type="journal article" date="1993" name="Int. J. Biochem.">
        <title>Cloning and characterization of rabbit pancreatic colipase.</title>
        <authorList>
            <person name="Colwell N.S."/>
            <person name="Aleman-Gomez J.A."/>
            <person name="Sasser T.L."/>
            <person name="Kumar V.B."/>
        </authorList>
    </citation>
    <scope>NUCLEOTIDE SEQUENCE [MRNA]</scope>
    <source>
        <tissue>Pancreas</tissue>
    </source>
</reference>
<sequence>MEKVLVLLLVALSVAYAAPGPRGIVINLEEGELCLNSAQCKSGCCHHSSALSLARCAPKASENSECSPQTIYGVYYKCPCERGLTCEGDKSIVGSITNTNFGVCLDV</sequence>
<evidence type="ECO:0000250" key="1">
    <source>
        <dbReference type="UniProtKB" id="P04118"/>
    </source>
</evidence>
<evidence type="ECO:0000255" key="2"/>
<evidence type="ECO:0000255" key="3">
    <source>
        <dbReference type="PROSITE-ProRule" id="PRU00674"/>
    </source>
</evidence>
<comment type="function">
    <text evidence="1">Colipase is a cofactor of pancreatic lipase. It allows the lipase to anchor itself to the lipid-water interface. Without colipase the enzyme is washed off by bile salts, which have an inhibitory effect on the lipase.</text>
</comment>
<comment type="function">
    <text evidence="1">Enterostatin has a biological activity as a satiety signal.</text>
</comment>
<comment type="subunit">
    <text evidence="1">Forms a 1:1 stoichiometric complex with pancreatic lipase.</text>
</comment>
<comment type="subcellular location">
    <subcellularLocation>
        <location>Secreted</location>
    </subcellularLocation>
</comment>
<comment type="tissue specificity">
    <text>Expressed by the pancreas.</text>
</comment>
<comment type="similarity">
    <text evidence="3">Belongs to the colipase family.</text>
</comment>
<protein>
    <recommendedName>
        <fullName>Colipase</fullName>
    </recommendedName>
</protein>
<dbReference type="EMBL" id="L06329">
    <property type="protein sequence ID" value="AAA02911.1"/>
    <property type="molecule type" value="mRNA"/>
</dbReference>
<dbReference type="RefSeq" id="NP_001075712.1">
    <property type="nucleotide sequence ID" value="NM_001082243.1"/>
</dbReference>
<dbReference type="SMR" id="P42890"/>
<dbReference type="FunCoup" id="P42890">
    <property type="interactions" value="6"/>
</dbReference>
<dbReference type="STRING" id="9986.ENSOCUP00000024363"/>
<dbReference type="PaxDb" id="9986-ENSOCUP00000024363"/>
<dbReference type="GeneID" id="100009061"/>
<dbReference type="KEGG" id="ocu:100009061"/>
<dbReference type="CTD" id="1208"/>
<dbReference type="eggNOG" id="ENOG502S4NY">
    <property type="taxonomic scope" value="Eukaryota"/>
</dbReference>
<dbReference type="InParanoid" id="P42890"/>
<dbReference type="OrthoDB" id="9826993at2759"/>
<dbReference type="Proteomes" id="UP000001811">
    <property type="component" value="Unplaced"/>
</dbReference>
<dbReference type="GO" id="GO:0005576">
    <property type="term" value="C:extracellular region"/>
    <property type="evidence" value="ECO:0007669"/>
    <property type="project" value="UniProtKB-SubCell"/>
</dbReference>
<dbReference type="GO" id="GO:0008047">
    <property type="term" value="F:enzyme activator activity"/>
    <property type="evidence" value="ECO:0007669"/>
    <property type="project" value="InterPro"/>
</dbReference>
<dbReference type="GO" id="GO:0035473">
    <property type="term" value="F:lipase binding"/>
    <property type="evidence" value="ECO:0007669"/>
    <property type="project" value="InterPro"/>
</dbReference>
<dbReference type="GO" id="GO:0007586">
    <property type="term" value="P:digestion"/>
    <property type="evidence" value="ECO:0007669"/>
    <property type="project" value="UniProtKB-KW"/>
</dbReference>
<dbReference type="GO" id="GO:0016042">
    <property type="term" value="P:lipid catabolic process"/>
    <property type="evidence" value="ECO:0007669"/>
    <property type="project" value="UniProtKB-KW"/>
</dbReference>
<dbReference type="GO" id="GO:0032094">
    <property type="term" value="P:response to food"/>
    <property type="evidence" value="ECO:0007669"/>
    <property type="project" value="TreeGrafter"/>
</dbReference>
<dbReference type="CDD" id="cd23011">
    <property type="entry name" value="CLPS"/>
    <property type="match status" value="1"/>
</dbReference>
<dbReference type="FunFam" id="2.10.80.10:FF:000005">
    <property type="entry name" value="Colipase"/>
    <property type="match status" value="1"/>
</dbReference>
<dbReference type="Gene3D" id="2.10.80.10">
    <property type="entry name" value="Lipase, subunit A"/>
    <property type="match status" value="1"/>
</dbReference>
<dbReference type="InterPro" id="IPR047576">
    <property type="entry name" value="CLPS_chr"/>
</dbReference>
<dbReference type="InterPro" id="IPR001981">
    <property type="entry name" value="Colipase"/>
</dbReference>
<dbReference type="InterPro" id="IPR017914">
    <property type="entry name" value="Colipase_C"/>
</dbReference>
<dbReference type="InterPro" id="IPR017915">
    <property type="entry name" value="Colipase_CS"/>
</dbReference>
<dbReference type="InterPro" id="IPR017913">
    <property type="entry name" value="Colipase_N"/>
</dbReference>
<dbReference type="PANTHER" id="PTHR10041">
    <property type="entry name" value="COLIPASE"/>
    <property type="match status" value="1"/>
</dbReference>
<dbReference type="PANTHER" id="PTHR10041:SF8">
    <property type="entry name" value="COLIPASE"/>
    <property type="match status" value="1"/>
</dbReference>
<dbReference type="Pfam" id="PF01114">
    <property type="entry name" value="Colipase"/>
    <property type="match status" value="1"/>
</dbReference>
<dbReference type="Pfam" id="PF02740">
    <property type="entry name" value="Colipase_C"/>
    <property type="match status" value="1"/>
</dbReference>
<dbReference type="PRINTS" id="PR00128">
    <property type="entry name" value="COLIPASE"/>
</dbReference>
<dbReference type="SMART" id="SM00023">
    <property type="entry name" value="COLIPASE"/>
    <property type="match status" value="1"/>
</dbReference>
<dbReference type="SUPFAM" id="SSF57190">
    <property type="entry name" value="Colipase-like"/>
    <property type="match status" value="2"/>
</dbReference>
<dbReference type="PROSITE" id="PS00121">
    <property type="entry name" value="COLIPASE_1"/>
    <property type="match status" value="1"/>
</dbReference>
<dbReference type="PROSITE" id="PS51342">
    <property type="entry name" value="COLIPASE_2"/>
    <property type="match status" value="1"/>
</dbReference>
<name>COL_RABIT</name>
<keyword id="KW-0222">Digestion</keyword>
<keyword id="KW-1015">Disulfide bond</keyword>
<keyword id="KW-0442">Lipid degradation</keyword>
<keyword id="KW-0443">Lipid metabolism</keyword>
<keyword id="KW-1185">Reference proteome</keyword>
<keyword id="KW-0964">Secreted</keyword>
<keyword id="KW-0732">Signal</keyword>